<sequence length="425" mass="50651">MQICKVFLTQVKKLLFVSLLFCLIAQTCWLALVPYQRQLSLDSYFFRRSREVSSRYDFTRRRHMNQTLKLSSNTYNDEPLNKTKGIKNQRENATLLMLVRNWELSGALRSMRSLEDRFNKNYQYDWTFLNDVPFDQEFIEATTAMASGRTQYALIPAEDWNRPSWINETLFEEALQLMEEKNILYGGSKSYRNMCRFNSGFFFRQKILDPYDFYFRVEPDVEYFCDFPYDPFKVMRQNNKKYGFVITMYEYEDTIPSLWEAVEEYLEETESADIDMESNAFGFVSNFDFIGKSFGVIDSNSGYNLCHFWTNFEIGDLNFFRSEKYIRFFEYLDSKGGFYYERWGDAPVHSIAASLLLKKDEIIHFDELGYKHMPFGTCPSAYYLRLQQRCLCDSNHPDNIDLNVISCLRRWWKDGSGKYFLKHDS</sequence>
<protein>
    <recommendedName>
        <fullName>Probable mannosyltransferase KTR2</fullName>
        <ecNumber>2.4.1.-</ecNumber>
    </recommendedName>
</protein>
<gene>
    <name type="primary">KTR2</name>
    <name type="ordered locus">YKR061W</name>
</gene>
<reference key="1">
    <citation type="journal article" date="1993" name="Yeast">
        <title>KTR2: a new member of the KRE2 mannosyltransferase gene family.</title>
        <authorList>
            <person name="Lussier M."/>
            <person name="Camirand A."/>
            <person name="Sdicu A.-M."/>
            <person name="Bussey H."/>
        </authorList>
    </citation>
    <scope>NUCLEOTIDE SEQUENCE</scope>
</reference>
<reference key="2">
    <citation type="journal article" date="1994" name="Nature">
        <title>Complete DNA sequence of yeast chromosome XI.</title>
        <authorList>
            <person name="Dujon B."/>
            <person name="Alexandraki D."/>
            <person name="Andre B."/>
            <person name="Ansorge W."/>
            <person name="Baladron V."/>
            <person name="Ballesta J.P.G."/>
            <person name="Banrevi A."/>
            <person name="Bolle P.-A."/>
            <person name="Bolotin-Fukuhara M."/>
            <person name="Bossier P."/>
            <person name="Bou G."/>
            <person name="Boyer J."/>
            <person name="Buitrago M.J."/>
            <person name="Cheret G."/>
            <person name="Colleaux L."/>
            <person name="Daignan-Fornier B."/>
            <person name="del Rey F."/>
            <person name="Dion C."/>
            <person name="Domdey H."/>
            <person name="Duesterhoeft A."/>
            <person name="Duesterhus S."/>
            <person name="Entian K.-D."/>
            <person name="Erfle H."/>
            <person name="Esteban P.F."/>
            <person name="Feldmann H."/>
            <person name="Fernandes L."/>
            <person name="Fobo G.M."/>
            <person name="Fritz C."/>
            <person name="Fukuhara H."/>
            <person name="Gabel C."/>
            <person name="Gaillon L."/>
            <person name="Garcia-Cantalejo J.M."/>
            <person name="Garcia-Ramirez J.J."/>
            <person name="Gent M.E."/>
            <person name="Ghazvini M."/>
            <person name="Goffeau A."/>
            <person name="Gonzalez A."/>
            <person name="Grothues D."/>
            <person name="Guerreiro P."/>
            <person name="Hegemann J.H."/>
            <person name="Hewitt N."/>
            <person name="Hilger F."/>
            <person name="Hollenberg C.P."/>
            <person name="Horaitis O."/>
            <person name="Indge K.J."/>
            <person name="Jacquier A."/>
            <person name="James C.M."/>
            <person name="Jauniaux J.-C."/>
            <person name="Jimenez A."/>
            <person name="Keuchel H."/>
            <person name="Kirchrath L."/>
            <person name="Kleine K."/>
            <person name="Koetter P."/>
            <person name="Legrain P."/>
            <person name="Liebl S."/>
            <person name="Louis E.J."/>
            <person name="Maia e Silva A."/>
            <person name="Marck C."/>
            <person name="Monnier A.-L."/>
            <person name="Moestl D."/>
            <person name="Mueller S."/>
            <person name="Obermaier B."/>
            <person name="Oliver S.G."/>
            <person name="Pallier C."/>
            <person name="Pascolo S."/>
            <person name="Pfeiffer F."/>
            <person name="Philippsen P."/>
            <person name="Planta R.J."/>
            <person name="Pohl F.M."/>
            <person name="Pohl T.M."/>
            <person name="Poehlmann R."/>
            <person name="Portetelle D."/>
            <person name="Purnelle B."/>
            <person name="Puzos V."/>
            <person name="Ramezani Rad M."/>
            <person name="Rasmussen S.W."/>
            <person name="Remacha M.A."/>
            <person name="Revuelta J.L."/>
            <person name="Richard G.-F."/>
            <person name="Rieger M."/>
            <person name="Rodrigues-Pousada C."/>
            <person name="Rose M."/>
            <person name="Rupp T."/>
            <person name="Santos M.A."/>
            <person name="Schwager C."/>
            <person name="Sensen C."/>
            <person name="Skala J."/>
            <person name="Soares H."/>
            <person name="Sor F."/>
            <person name="Stegemann J."/>
            <person name="Tettelin H."/>
            <person name="Thierry A."/>
            <person name="Tzermia M."/>
            <person name="Urrestarazu L.A."/>
            <person name="van Dyck L."/>
            <person name="van Vliet-Reedijk J.C."/>
            <person name="Valens M."/>
            <person name="Vandenbol M."/>
            <person name="Vilela C."/>
            <person name="Vissers S."/>
            <person name="von Wettstein D."/>
            <person name="Voss H."/>
            <person name="Wiemann S."/>
            <person name="Xu G."/>
            <person name="Zimmermann J."/>
            <person name="Haasemann M."/>
            <person name="Becker I."/>
            <person name="Mewes H.-W."/>
        </authorList>
    </citation>
    <scope>NUCLEOTIDE SEQUENCE [LARGE SCALE GENOMIC DNA]</scope>
    <source>
        <strain>ATCC 204508 / S288c</strain>
    </source>
</reference>
<reference key="3">
    <citation type="journal article" date="2014" name="G3 (Bethesda)">
        <title>The reference genome sequence of Saccharomyces cerevisiae: Then and now.</title>
        <authorList>
            <person name="Engel S.R."/>
            <person name="Dietrich F.S."/>
            <person name="Fisk D.G."/>
            <person name="Binkley G."/>
            <person name="Balakrishnan R."/>
            <person name="Costanzo M.C."/>
            <person name="Dwight S.S."/>
            <person name="Hitz B.C."/>
            <person name="Karra K."/>
            <person name="Nash R.S."/>
            <person name="Weng S."/>
            <person name="Wong E.D."/>
            <person name="Lloyd P."/>
            <person name="Skrzypek M.S."/>
            <person name="Miyasato S.R."/>
            <person name="Simison M."/>
            <person name="Cherry J.M."/>
        </authorList>
    </citation>
    <scope>GENOME REANNOTATION</scope>
    <source>
        <strain>ATCC 204508 / S288c</strain>
    </source>
</reference>
<feature type="chain" id="PRO_0000208243" description="Probable mannosyltransferase KTR2">
    <location>
        <begin position="1"/>
        <end position="425"/>
    </location>
</feature>
<feature type="topological domain" description="Cytoplasmic" evidence="2">
    <location>
        <begin position="1"/>
        <end position="13"/>
    </location>
</feature>
<feature type="transmembrane region" description="Helical; Signal-anchor for type II membrane protein">
    <location>
        <begin position="14"/>
        <end position="33"/>
    </location>
</feature>
<feature type="topological domain" description="Lumenal" evidence="2">
    <location>
        <begin position="34"/>
        <end position="425"/>
    </location>
</feature>
<feature type="region of interest" description="Stem region" evidence="1">
    <location>
        <begin position="34"/>
        <end position="89"/>
    </location>
</feature>
<feature type="region of interest" description="Catalytic" evidence="1">
    <location>
        <begin position="90"/>
        <end position="425"/>
    </location>
</feature>
<feature type="active site" description="Nucleophile" evidence="2">
    <location>
        <position position="313"/>
    </location>
</feature>
<feature type="glycosylation site" description="N-linked (GlcNAc...) asparagine" evidence="2">
    <location>
        <position position="65"/>
    </location>
</feature>
<feature type="glycosylation site" description="N-linked (GlcNAc...) asparagine" evidence="2">
    <location>
        <position position="81"/>
    </location>
</feature>
<feature type="glycosylation site" description="N-linked (GlcNAc...) asparagine" evidence="2">
    <location>
        <position position="92"/>
    </location>
</feature>
<feature type="glycosylation site" description="N-linked (GlcNAc...) asparagine" evidence="2">
    <location>
        <position position="167"/>
    </location>
</feature>
<comment type="function">
    <text>Involved in N-linked glycosylation. Transfers an alpha-D-mannosyl residue from GDP-mannose into lipid-linked oligosaccharide, forming an alpha-(1-&gt;2)-D-mannosyl-D-mannose linkage.</text>
</comment>
<comment type="pathway">
    <text>Protein modification; protein glycosylation.</text>
</comment>
<comment type="subcellular location">
    <subcellularLocation>
        <location>Golgi apparatus membrane</location>
        <topology>Single-pass type II membrane protein</topology>
    </subcellularLocation>
</comment>
<comment type="similarity">
    <text evidence="3">Belongs to the glycosyltransferase 15 family.</text>
</comment>
<organism>
    <name type="scientific">Saccharomyces cerevisiae (strain ATCC 204508 / S288c)</name>
    <name type="common">Baker's yeast</name>
    <dbReference type="NCBI Taxonomy" id="559292"/>
    <lineage>
        <taxon>Eukaryota</taxon>
        <taxon>Fungi</taxon>
        <taxon>Dikarya</taxon>
        <taxon>Ascomycota</taxon>
        <taxon>Saccharomycotina</taxon>
        <taxon>Saccharomycetes</taxon>
        <taxon>Saccharomycetales</taxon>
        <taxon>Saccharomycetaceae</taxon>
        <taxon>Saccharomyces</taxon>
    </lineage>
</organism>
<evidence type="ECO:0000250" key="1"/>
<evidence type="ECO:0000255" key="2"/>
<evidence type="ECO:0000305" key="3"/>
<accession>P33550</accession>
<accession>D6VXC2</accession>
<dbReference type="EC" id="2.4.1.-"/>
<dbReference type="EMBL" id="L17083">
    <property type="protein sequence ID" value="AAA16119.1"/>
    <property type="molecule type" value="Unassigned_DNA"/>
</dbReference>
<dbReference type="EMBL" id="Z28286">
    <property type="protein sequence ID" value="CAA82140.1"/>
    <property type="molecule type" value="Genomic_DNA"/>
</dbReference>
<dbReference type="EMBL" id="BK006944">
    <property type="protein sequence ID" value="DAA09212.1"/>
    <property type="molecule type" value="Genomic_DNA"/>
</dbReference>
<dbReference type="PIR" id="S38193">
    <property type="entry name" value="S38193"/>
</dbReference>
<dbReference type="RefSeq" id="NP_012987.3">
    <property type="nucleotide sequence ID" value="NM_001179851.3"/>
</dbReference>
<dbReference type="SMR" id="P33550"/>
<dbReference type="BioGRID" id="34192">
    <property type="interactions" value="109"/>
</dbReference>
<dbReference type="FunCoup" id="P33550">
    <property type="interactions" value="79"/>
</dbReference>
<dbReference type="IntAct" id="P33550">
    <property type="interactions" value="1"/>
</dbReference>
<dbReference type="MINT" id="P33550"/>
<dbReference type="STRING" id="4932.YKR061W"/>
<dbReference type="CAZy" id="GT15">
    <property type="family name" value="Glycosyltransferase Family 15"/>
</dbReference>
<dbReference type="GlyCosmos" id="P33550">
    <property type="glycosylation" value="4 sites, No reported glycans"/>
</dbReference>
<dbReference type="GlyGen" id="P33550">
    <property type="glycosylation" value="4 sites"/>
</dbReference>
<dbReference type="iPTMnet" id="P33550"/>
<dbReference type="PaxDb" id="4932-YKR061W"/>
<dbReference type="PeptideAtlas" id="P33550"/>
<dbReference type="EnsemblFungi" id="YKR061W_mRNA">
    <property type="protein sequence ID" value="YKR061W"/>
    <property type="gene ID" value="YKR061W"/>
</dbReference>
<dbReference type="GeneID" id="853935"/>
<dbReference type="KEGG" id="sce:YKR061W"/>
<dbReference type="AGR" id="SGD:S000001769"/>
<dbReference type="SGD" id="S000001769">
    <property type="gene designation" value="KTR2"/>
</dbReference>
<dbReference type="VEuPathDB" id="FungiDB:YKR061W"/>
<dbReference type="eggNOG" id="KOG4472">
    <property type="taxonomic scope" value="Eukaryota"/>
</dbReference>
<dbReference type="GeneTree" id="ENSGT00940000176287"/>
<dbReference type="HOGENOM" id="CLU_024327_4_2_1"/>
<dbReference type="InParanoid" id="P33550"/>
<dbReference type="OMA" id="CPSAYYM"/>
<dbReference type="OrthoDB" id="439943at2759"/>
<dbReference type="BioCyc" id="YEAST:G3O-32029-MONOMER"/>
<dbReference type="UniPathway" id="UPA00378"/>
<dbReference type="BioGRID-ORCS" id="853935">
    <property type="hits" value="0 hits in 10 CRISPR screens"/>
</dbReference>
<dbReference type="PRO" id="PR:P33550"/>
<dbReference type="Proteomes" id="UP000002311">
    <property type="component" value="Chromosome XI"/>
</dbReference>
<dbReference type="RNAct" id="P33550">
    <property type="molecule type" value="protein"/>
</dbReference>
<dbReference type="GO" id="GO:0005794">
    <property type="term" value="C:Golgi apparatus"/>
    <property type="evidence" value="ECO:0000314"/>
    <property type="project" value="SGD"/>
</dbReference>
<dbReference type="GO" id="GO:0000139">
    <property type="term" value="C:Golgi membrane"/>
    <property type="evidence" value="ECO:0007669"/>
    <property type="project" value="UniProtKB-SubCell"/>
</dbReference>
<dbReference type="GO" id="GO:0000026">
    <property type="term" value="F:alpha-1,2-mannosyltransferase activity"/>
    <property type="evidence" value="ECO:0000318"/>
    <property type="project" value="GO_Central"/>
</dbReference>
<dbReference type="GO" id="GO:0000030">
    <property type="term" value="F:mannosyltransferase activity"/>
    <property type="evidence" value="ECO:0000314"/>
    <property type="project" value="SGD"/>
</dbReference>
<dbReference type="GO" id="GO:0000032">
    <property type="term" value="P:cell wall mannoprotein biosynthetic process"/>
    <property type="evidence" value="ECO:0000315"/>
    <property type="project" value="SGD"/>
</dbReference>
<dbReference type="GO" id="GO:0006487">
    <property type="term" value="P:protein N-linked glycosylation"/>
    <property type="evidence" value="ECO:0000315"/>
    <property type="project" value="SGD"/>
</dbReference>
<dbReference type="GO" id="GO:0006493">
    <property type="term" value="P:protein O-linked glycosylation"/>
    <property type="evidence" value="ECO:0000318"/>
    <property type="project" value="GO_Central"/>
</dbReference>
<dbReference type="FunFam" id="3.90.550.10:FF:000051">
    <property type="entry name" value="Alpha-1,2-mannosyltransferase (Ktr4)"/>
    <property type="match status" value="1"/>
</dbReference>
<dbReference type="Gene3D" id="3.90.550.10">
    <property type="entry name" value="Spore Coat Polysaccharide Biosynthesis Protein SpsA, Chain A"/>
    <property type="match status" value="1"/>
</dbReference>
<dbReference type="InterPro" id="IPR002685">
    <property type="entry name" value="Glyco_trans_15"/>
</dbReference>
<dbReference type="InterPro" id="IPR029044">
    <property type="entry name" value="Nucleotide-diphossugar_trans"/>
</dbReference>
<dbReference type="PANTHER" id="PTHR31121">
    <property type="entry name" value="ALPHA-1,2 MANNOSYLTRANSFERASE KTR1"/>
    <property type="match status" value="1"/>
</dbReference>
<dbReference type="PANTHER" id="PTHR31121:SF10">
    <property type="entry name" value="MANNOSYLTRANSFERASE KTR2-RELATED"/>
    <property type="match status" value="1"/>
</dbReference>
<dbReference type="Pfam" id="PF01793">
    <property type="entry name" value="Glyco_transf_15"/>
    <property type="match status" value="1"/>
</dbReference>
<dbReference type="PIRSF" id="PIRSF018153">
    <property type="entry name" value="Glyco_trans_15"/>
    <property type="match status" value="1"/>
</dbReference>
<dbReference type="SUPFAM" id="SSF53448">
    <property type="entry name" value="Nucleotide-diphospho-sugar transferases"/>
    <property type="match status" value="1"/>
</dbReference>
<keyword id="KW-0325">Glycoprotein</keyword>
<keyword id="KW-0328">Glycosyltransferase</keyword>
<keyword id="KW-0333">Golgi apparatus</keyword>
<keyword id="KW-0472">Membrane</keyword>
<keyword id="KW-1185">Reference proteome</keyword>
<keyword id="KW-0735">Signal-anchor</keyword>
<keyword id="KW-0808">Transferase</keyword>
<keyword id="KW-0812">Transmembrane</keyword>
<keyword id="KW-1133">Transmembrane helix</keyword>
<name>KTR2_YEAST</name>
<proteinExistence type="inferred from homology"/>